<reference key="1">
    <citation type="submission" date="2008-05" db="EMBL/GenBank/DDBJ databases">
        <title>Complete sequence of Rhodopseudomonas palustris TIE-1.</title>
        <authorList>
            <consortium name="US DOE Joint Genome Institute"/>
            <person name="Lucas S."/>
            <person name="Copeland A."/>
            <person name="Lapidus A."/>
            <person name="Glavina del Rio T."/>
            <person name="Dalin E."/>
            <person name="Tice H."/>
            <person name="Pitluck S."/>
            <person name="Chain P."/>
            <person name="Malfatti S."/>
            <person name="Shin M."/>
            <person name="Vergez L."/>
            <person name="Lang D."/>
            <person name="Schmutz J."/>
            <person name="Larimer F."/>
            <person name="Land M."/>
            <person name="Hauser L."/>
            <person name="Kyrpides N."/>
            <person name="Mikhailova N."/>
            <person name="Emerson D."/>
            <person name="Newman D.K."/>
            <person name="Roden E."/>
            <person name="Richardson P."/>
        </authorList>
    </citation>
    <scope>NUCLEOTIDE SEQUENCE [LARGE SCALE GENOMIC DNA]</scope>
    <source>
        <strain>TIE-1</strain>
    </source>
</reference>
<name>GATC_RHOPT</name>
<comment type="function">
    <text evidence="1">Allows the formation of correctly charged Asn-tRNA(Asn) or Gln-tRNA(Gln) through the transamidation of misacylated Asp-tRNA(Asn) or Glu-tRNA(Gln) in organisms which lack either or both of asparaginyl-tRNA or glutaminyl-tRNA synthetases. The reaction takes place in the presence of glutamine and ATP through an activated phospho-Asp-tRNA(Asn) or phospho-Glu-tRNA(Gln).</text>
</comment>
<comment type="catalytic activity">
    <reaction evidence="1">
        <text>L-glutamyl-tRNA(Gln) + L-glutamine + ATP + H2O = L-glutaminyl-tRNA(Gln) + L-glutamate + ADP + phosphate + H(+)</text>
        <dbReference type="Rhea" id="RHEA:17521"/>
        <dbReference type="Rhea" id="RHEA-COMP:9681"/>
        <dbReference type="Rhea" id="RHEA-COMP:9684"/>
        <dbReference type="ChEBI" id="CHEBI:15377"/>
        <dbReference type="ChEBI" id="CHEBI:15378"/>
        <dbReference type="ChEBI" id="CHEBI:29985"/>
        <dbReference type="ChEBI" id="CHEBI:30616"/>
        <dbReference type="ChEBI" id="CHEBI:43474"/>
        <dbReference type="ChEBI" id="CHEBI:58359"/>
        <dbReference type="ChEBI" id="CHEBI:78520"/>
        <dbReference type="ChEBI" id="CHEBI:78521"/>
        <dbReference type="ChEBI" id="CHEBI:456216"/>
    </reaction>
</comment>
<comment type="catalytic activity">
    <reaction evidence="1">
        <text>L-aspartyl-tRNA(Asn) + L-glutamine + ATP + H2O = L-asparaginyl-tRNA(Asn) + L-glutamate + ADP + phosphate + 2 H(+)</text>
        <dbReference type="Rhea" id="RHEA:14513"/>
        <dbReference type="Rhea" id="RHEA-COMP:9674"/>
        <dbReference type="Rhea" id="RHEA-COMP:9677"/>
        <dbReference type="ChEBI" id="CHEBI:15377"/>
        <dbReference type="ChEBI" id="CHEBI:15378"/>
        <dbReference type="ChEBI" id="CHEBI:29985"/>
        <dbReference type="ChEBI" id="CHEBI:30616"/>
        <dbReference type="ChEBI" id="CHEBI:43474"/>
        <dbReference type="ChEBI" id="CHEBI:58359"/>
        <dbReference type="ChEBI" id="CHEBI:78515"/>
        <dbReference type="ChEBI" id="CHEBI:78516"/>
        <dbReference type="ChEBI" id="CHEBI:456216"/>
    </reaction>
</comment>
<comment type="subunit">
    <text evidence="1">Heterotrimer of A, B and C subunits.</text>
</comment>
<comment type="similarity">
    <text evidence="1">Belongs to the GatC family.</text>
</comment>
<sequence length="95" mass="10371">MSVDAATVRRIAHLARIAVTEDEVPHLQGELNAMLAFVEQLSEVDVDGVEPMTSVTPMQMKKRADVVNDGEIADQVVANAPSTEDHFFLVPKVVE</sequence>
<accession>B3Q9W8</accession>
<keyword id="KW-0067">ATP-binding</keyword>
<keyword id="KW-0436">Ligase</keyword>
<keyword id="KW-0547">Nucleotide-binding</keyword>
<keyword id="KW-0648">Protein biosynthesis</keyword>
<dbReference type="EC" id="6.3.5.-" evidence="1"/>
<dbReference type="EMBL" id="CP001096">
    <property type="protein sequence ID" value="ACF02021.1"/>
    <property type="molecule type" value="Genomic_DNA"/>
</dbReference>
<dbReference type="RefSeq" id="WP_012496548.1">
    <property type="nucleotide sequence ID" value="NC_011004.1"/>
</dbReference>
<dbReference type="SMR" id="B3Q9W8"/>
<dbReference type="KEGG" id="rpt:Rpal_3521"/>
<dbReference type="HOGENOM" id="CLU_105899_2_0_5"/>
<dbReference type="OrthoDB" id="9794326at2"/>
<dbReference type="Proteomes" id="UP000001725">
    <property type="component" value="Chromosome"/>
</dbReference>
<dbReference type="GO" id="GO:0050566">
    <property type="term" value="F:asparaginyl-tRNA synthase (glutamine-hydrolyzing) activity"/>
    <property type="evidence" value="ECO:0007669"/>
    <property type="project" value="RHEA"/>
</dbReference>
<dbReference type="GO" id="GO:0005524">
    <property type="term" value="F:ATP binding"/>
    <property type="evidence" value="ECO:0007669"/>
    <property type="project" value="UniProtKB-KW"/>
</dbReference>
<dbReference type="GO" id="GO:0050567">
    <property type="term" value="F:glutaminyl-tRNA synthase (glutamine-hydrolyzing) activity"/>
    <property type="evidence" value="ECO:0007669"/>
    <property type="project" value="UniProtKB-UniRule"/>
</dbReference>
<dbReference type="GO" id="GO:0070681">
    <property type="term" value="P:glutaminyl-tRNAGln biosynthesis via transamidation"/>
    <property type="evidence" value="ECO:0007669"/>
    <property type="project" value="TreeGrafter"/>
</dbReference>
<dbReference type="GO" id="GO:0006450">
    <property type="term" value="P:regulation of translational fidelity"/>
    <property type="evidence" value="ECO:0007669"/>
    <property type="project" value="InterPro"/>
</dbReference>
<dbReference type="GO" id="GO:0006412">
    <property type="term" value="P:translation"/>
    <property type="evidence" value="ECO:0007669"/>
    <property type="project" value="UniProtKB-UniRule"/>
</dbReference>
<dbReference type="Gene3D" id="1.10.20.60">
    <property type="entry name" value="Glu-tRNAGln amidotransferase C subunit, N-terminal domain"/>
    <property type="match status" value="1"/>
</dbReference>
<dbReference type="HAMAP" id="MF_00122">
    <property type="entry name" value="GatC"/>
    <property type="match status" value="1"/>
</dbReference>
<dbReference type="InterPro" id="IPR036113">
    <property type="entry name" value="Asp/Glu-ADT_sf_sub_c"/>
</dbReference>
<dbReference type="InterPro" id="IPR003837">
    <property type="entry name" value="GatC"/>
</dbReference>
<dbReference type="NCBIfam" id="TIGR00135">
    <property type="entry name" value="gatC"/>
    <property type="match status" value="1"/>
</dbReference>
<dbReference type="PANTHER" id="PTHR15004">
    <property type="entry name" value="GLUTAMYL-TRNA(GLN) AMIDOTRANSFERASE SUBUNIT C, MITOCHONDRIAL"/>
    <property type="match status" value="1"/>
</dbReference>
<dbReference type="PANTHER" id="PTHR15004:SF0">
    <property type="entry name" value="GLUTAMYL-TRNA(GLN) AMIDOTRANSFERASE SUBUNIT C, MITOCHONDRIAL"/>
    <property type="match status" value="1"/>
</dbReference>
<dbReference type="Pfam" id="PF02686">
    <property type="entry name" value="GatC"/>
    <property type="match status" value="1"/>
</dbReference>
<dbReference type="SUPFAM" id="SSF141000">
    <property type="entry name" value="Glu-tRNAGln amidotransferase C subunit"/>
    <property type="match status" value="1"/>
</dbReference>
<gene>
    <name evidence="1" type="primary">gatC</name>
    <name type="ordered locus">Rpal_3521</name>
</gene>
<organism>
    <name type="scientific">Rhodopseudomonas palustris (strain TIE-1)</name>
    <dbReference type="NCBI Taxonomy" id="395960"/>
    <lineage>
        <taxon>Bacteria</taxon>
        <taxon>Pseudomonadati</taxon>
        <taxon>Pseudomonadota</taxon>
        <taxon>Alphaproteobacteria</taxon>
        <taxon>Hyphomicrobiales</taxon>
        <taxon>Nitrobacteraceae</taxon>
        <taxon>Rhodopseudomonas</taxon>
    </lineage>
</organism>
<feature type="chain" id="PRO_1000095313" description="Aspartyl/glutamyl-tRNA(Asn/Gln) amidotransferase subunit C">
    <location>
        <begin position="1"/>
        <end position="95"/>
    </location>
</feature>
<evidence type="ECO:0000255" key="1">
    <source>
        <dbReference type="HAMAP-Rule" id="MF_00122"/>
    </source>
</evidence>
<proteinExistence type="inferred from homology"/>
<protein>
    <recommendedName>
        <fullName evidence="1">Aspartyl/glutamyl-tRNA(Asn/Gln) amidotransferase subunit C</fullName>
        <shortName evidence="1">Asp/Glu-ADT subunit C</shortName>
        <ecNumber evidence="1">6.3.5.-</ecNumber>
    </recommendedName>
</protein>